<keyword id="KW-0130">Cell adhesion</keyword>
<keyword id="KW-0965">Cell junction</keyword>
<keyword id="KW-0966">Cell projection</keyword>
<keyword id="KW-1015">Disulfide bond</keyword>
<keyword id="KW-0245">EGF-like domain</keyword>
<keyword id="KW-0325">Glycoprotein</keyword>
<keyword id="KW-0472">Membrane</keyword>
<keyword id="KW-0597">Phosphoprotein</keyword>
<keyword id="KW-1185">Reference proteome</keyword>
<keyword id="KW-0677">Repeat</keyword>
<keyword id="KW-0732">Signal</keyword>
<keyword id="KW-0812">Transmembrane</keyword>
<keyword id="KW-1133">Transmembrane helix</keyword>
<accession>Q5RD64</accession>
<proteinExistence type="evidence at transcript level"/>
<organism>
    <name type="scientific">Pongo abelii</name>
    <name type="common">Sumatran orangutan</name>
    <name type="synonym">Pongo pygmaeus abelii</name>
    <dbReference type="NCBI Taxonomy" id="9601"/>
    <lineage>
        <taxon>Eukaryota</taxon>
        <taxon>Metazoa</taxon>
        <taxon>Chordata</taxon>
        <taxon>Craniata</taxon>
        <taxon>Vertebrata</taxon>
        <taxon>Euteleostomi</taxon>
        <taxon>Mammalia</taxon>
        <taxon>Eutheria</taxon>
        <taxon>Euarchontoglires</taxon>
        <taxon>Primates</taxon>
        <taxon>Haplorrhini</taxon>
        <taxon>Catarrhini</taxon>
        <taxon>Hominidae</taxon>
        <taxon>Pongo</taxon>
    </lineage>
</organism>
<gene>
    <name type="primary">CNTNAP2</name>
</gene>
<name>CNTP2_PONAB</name>
<protein>
    <recommendedName>
        <fullName>Contactin-associated protein-like 2</fullName>
    </recommendedName>
</protein>
<feature type="signal peptide" evidence="4">
    <location>
        <begin position="1"/>
        <end position="27"/>
    </location>
</feature>
<feature type="chain" id="PRO_0000019508" description="Contactin-associated protein-like 2">
    <location>
        <begin position="28"/>
        <end position="1331"/>
    </location>
</feature>
<feature type="topological domain" description="Extracellular" evidence="4">
    <location>
        <begin position="28"/>
        <end position="1262"/>
    </location>
</feature>
<feature type="transmembrane region" description="Helical" evidence="4">
    <location>
        <begin position="1263"/>
        <end position="1283"/>
    </location>
</feature>
<feature type="topological domain" description="Cytoplasmic" evidence="4">
    <location>
        <begin position="1284"/>
        <end position="1331"/>
    </location>
</feature>
<feature type="domain" description="F5/8 type C" evidence="6">
    <location>
        <begin position="35"/>
        <end position="181"/>
    </location>
</feature>
<feature type="domain" description="Laminin G-like 1" evidence="7">
    <location>
        <begin position="187"/>
        <end position="368"/>
    </location>
</feature>
<feature type="domain" description="Laminin G-like 2" evidence="7">
    <location>
        <begin position="373"/>
        <end position="552"/>
    </location>
</feature>
<feature type="domain" description="EGF-like 1" evidence="5">
    <location>
        <begin position="554"/>
        <end position="591"/>
    </location>
</feature>
<feature type="domain" description="Fibrinogen C-terminal" evidence="8">
    <location>
        <begin position="592"/>
        <end position="798"/>
    </location>
</feature>
<feature type="domain" description="Laminin G-like 3" evidence="7">
    <location>
        <begin position="799"/>
        <end position="963"/>
    </location>
</feature>
<feature type="domain" description="EGF-like 2" evidence="5">
    <location>
        <begin position="964"/>
        <end position="1002"/>
    </location>
</feature>
<feature type="domain" description="Laminin G-like 4" evidence="7">
    <location>
        <begin position="1023"/>
        <end position="1214"/>
    </location>
</feature>
<feature type="modified residue" description="Phosphoserine" evidence="2">
    <location>
        <position position="1303"/>
    </location>
</feature>
<feature type="modified residue" description="Phosphoserine" evidence="2">
    <location>
        <position position="1306"/>
    </location>
</feature>
<feature type="glycosylation site" description="N-linked (GlcNAc...) asparagine" evidence="4">
    <location>
        <position position="289"/>
    </location>
</feature>
<feature type="glycosylation site" description="N-linked (GlcNAc...) asparagine" evidence="4">
    <location>
        <position position="346"/>
    </location>
</feature>
<feature type="glycosylation site" description="N-linked (GlcNAc...) asparagine" evidence="4">
    <location>
        <position position="363"/>
    </location>
</feature>
<feature type="glycosylation site" description="N-linked (GlcNAc...) asparagine" evidence="4">
    <location>
        <position position="379"/>
    </location>
</feature>
<feature type="glycosylation site" description="N-linked (GlcNAc...) asparagine" evidence="4">
    <location>
        <position position="436"/>
    </location>
</feature>
<feature type="glycosylation site" description="N-linked (GlcNAc...) asparagine" evidence="4">
    <location>
        <position position="506"/>
    </location>
</feature>
<feature type="glycosylation site" description="N-linked (GlcNAc...) asparagine" evidence="4">
    <location>
        <position position="507"/>
    </location>
</feature>
<feature type="glycosylation site" description="N-linked (GlcNAc...) asparagine" evidence="4">
    <location>
        <position position="546"/>
    </location>
</feature>
<feature type="glycosylation site" description="N-linked (GlcNAc...) asparagine" evidence="4">
    <location>
        <position position="630"/>
    </location>
</feature>
<feature type="glycosylation site" description="N-linked (GlcNAc...) asparagine" evidence="4">
    <location>
        <position position="735"/>
    </location>
</feature>
<feature type="glycosylation site" description="N-linked (GlcNAc...) asparagine" evidence="4">
    <location>
        <position position="1116"/>
    </location>
</feature>
<feature type="glycosylation site" description="N-linked (GlcNAc...) asparagine" evidence="4">
    <location>
        <position position="1198"/>
    </location>
</feature>
<feature type="disulfide bond" evidence="1">
    <location>
        <begin position="35"/>
        <end position="181"/>
    </location>
</feature>
<feature type="disulfide bond" evidence="1">
    <location>
        <begin position="336"/>
        <end position="368"/>
    </location>
</feature>
<feature type="disulfide bond" evidence="1">
    <location>
        <begin position="520"/>
        <end position="552"/>
    </location>
</feature>
<feature type="disulfide bond" evidence="1">
    <location>
        <begin position="558"/>
        <end position="569"/>
    </location>
</feature>
<feature type="disulfide bond" evidence="1">
    <location>
        <begin position="563"/>
        <end position="578"/>
    </location>
</feature>
<feature type="disulfide bond" evidence="1">
    <location>
        <begin position="580"/>
        <end position="590"/>
    </location>
</feature>
<feature type="disulfide bond" evidence="1">
    <location>
        <begin position="936"/>
        <end position="963"/>
    </location>
</feature>
<feature type="disulfide bond" evidence="1">
    <location>
        <begin position="967"/>
        <end position="980"/>
    </location>
</feature>
<feature type="disulfide bond" evidence="1">
    <location>
        <begin position="974"/>
        <end position="989"/>
    </location>
</feature>
<feature type="disulfide bond" evidence="1">
    <location>
        <begin position="991"/>
        <end position="1001"/>
    </location>
</feature>
<feature type="disulfide bond" evidence="1">
    <location>
        <begin position="1178"/>
        <end position="1214"/>
    </location>
</feature>
<dbReference type="EMBL" id="CR858053">
    <property type="protein sequence ID" value="CAH90293.1"/>
    <property type="molecule type" value="mRNA"/>
</dbReference>
<dbReference type="RefSeq" id="NP_001127265.1">
    <property type="nucleotide sequence ID" value="NM_001133793.1"/>
</dbReference>
<dbReference type="SMR" id="Q5RD64"/>
<dbReference type="FunCoup" id="Q5RD64">
    <property type="interactions" value="614"/>
</dbReference>
<dbReference type="STRING" id="9601.ENSPPYP00000020350"/>
<dbReference type="GlyCosmos" id="Q5RD64">
    <property type="glycosylation" value="12 sites, No reported glycans"/>
</dbReference>
<dbReference type="GeneID" id="100174321"/>
<dbReference type="KEGG" id="pon:100174321"/>
<dbReference type="CTD" id="26047"/>
<dbReference type="eggNOG" id="KOG3516">
    <property type="taxonomic scope" value="Eukaryota"/>
</dbReference>
<dbReference type="InParanoid" id="Q5RD64"/>
<dbReference type="OrthoDB" id="26719at2759"/>
<dbReference type="Proteomes" id="UP000001595">
    <property type="component" value="Unplaced"/>
</dbReference>
<dbReference type="GO" id="GO:0044224">
    <property type="term" value="C:juxtaparanode region of axon"/>
    <property type="evidence" value="ECO:0000250"/>
    <property type="project" value="UniProtKB"/>
</dbReference>
<dbReference type="GO" id="GO:0016020">
    <property type="term" value="C:membrane"/>
    <property type="evidence" value="ECO:0000250"/>
    <property type="project" value="UniProtKB"/>
</dbReference>
<dbReference type="GO" id="GO:0033010">
    <property type="term" value="C:paranodal junction"/>
    <property type="evidence" value="ECO:0007669"/>
    <property type="project" value="UniProtKB-SubCell"/>
</dbReference>
<dbReference type="GO" id="GO:0007155">
    <property type="term" value="P:cell adhesion"/>
    <property type="evidence" value="ECO:0007669"/>
    <property type="project" value="UniProtKB-KW"/>
</dbReference>
<dbReference type="GO" id="GO:0048812">
    <property type="term" value="P:neuron projection morphogenesis"/>
    <property type="evidence" value="ECO:0000250"/>
    <property type="project" value="UniProtKB"/>
</dbReference>
<dbReference type="GO" id="GO:0071205">
    <property type="term" value="P:protein localization to juxtaparanode region of axon"/>
    <property type="evidence" value="ECO:0000250"/>
    <property type="project" value="UniProtKB"/>
</dbReference>
<dbReference type="CDD" id="cd00054">
    <property type="entry name" value="EGF_CA"/>
    <property type="match status" value="2"/>
</dbReference>
<dbReference type="CDD" id="cd00057">
    <property type="entry name" value="FA58C"/>
    <property type="match status" value="1"/>
</dbReference>
<dbReference type="CDD" id="cd00110">
    <property type="entry name" value="LamG"/>
    <property type="match status" value="4"/>
</dbReference>
<dbReference type="FunFam" id="2.60.120.200:FF:000082">
    <property type="entry name" value="Contactin associated protein 1"/>
    <property type="match status" value="1"/>
</dbReference>
<dbReference type="FunFam" id="2.60.120.200:FF:000099">
    <property type="entry name" value="Contactin associated protein 1"/>
    <property type="match status" value="1"/>
</dbReference>
<dbReference type="FunFam" id="2.60.120.1000:FF:000005">
    <property type="entry name" value="Contactin associated protein-like 2"/>
    <property type="match status" value="1"/>
</dbReference>
<dbReference type="FunFam" id="2.60.120.200:FF:000088">
    <property type="entry name" value="Contactin associated protein-like 2"/>
    <property type="match status" value="1"/>
</dbReference>
<dbReference type="FunFam" id="2.60.120.260:FF:000016">
    <property type="entry name" value="Contactin-associated protein-like 4 isoform 1"/>
    <property type="match status" value="1"/>
</dbReference>
<dbReference type="FunFam" id="2.60.120.200:FF:000026">
    <property type="entry name" value="contactin-associated protein-like 4 isoform X1"/>
    <property type="match status" value="1"/>
</dbReference>
<dbReference type="FunFam" id="2.10.25.10:FF:000015">
    <property type="entry name" value="neurexin-1 isoform X1"/>
    <property type="match status" value="1"/>
</dbReference>
<dbReference type="Gene3D" id="2.60.120.1000">
    <property type="match status" value="1"/>
</dbReference>
<dbReference type="Gene3D" id="2.60.120.200">
    <property type="match status" value="4"/>
</dbReference>
<dbReference type="Gene3D" id="2.60.120.260">
    <property type="entry name" value="Galactose-binding domain-like"/>
    <property type="match status" value="1"/>
</dbReference>
<dbReference type="Gene3D" id="2.10.25.10">
    <property type="entry name" value="Laminin"/>
    <property type="match status" value="2"/>
</dbReference>
<dbReference type="InterPro" id="IPR013320">
    <property type="entry name" value="ConA-like_dom_sf"/>
</dbReference>
<dbReference type="InterPro" id="IPR000742">
    <property type="entry name" value="EGF-like_dom"/>
</dbReference>
<dbReference type="InterPro" id="IPR000421">
    <property type="entry name" value="FA58C"/>
</dbReference>
<dbReference type="InterPro" id="IPR036056">
    <property type="entry name" value="Fibrinogen-like_C"/>
</dbReference>
<dbReference type="InterPro" id="IPR002181">
    <property type="entry name" value="Fibrinogen_a/b/g_C_dom"/>
</dbReference>
<dbReference type="InterPro" id="IPR008979">
    <property type="entry name" value="Galactose-bd-like_sf"/>
</dbReference>
<dbReference type="InterPro" id="IPR001791">
    <property type="entry name" value="Laminin_G"/>
</dbReference>
<dbReference type="InterPro" id="IPR003585">
    <property type="entry name" value="Neurexin-like"/>
</dbReference>
<dbReference type="InterPro" id="IPR050372">
    <property type="entry name" value="Neurexin-related_CASP"/>
</dbReference>
<dbReference type="NCBIfam" id="NF040941">
    <property type="entry name" value="GGGWT_bact"/>
    <property type="match status" value="1"/>
</dbReference>
<dbReference type="PANTHER" id="PTHR15036:SF33">
    <property type="entry name" value="CONTACTIN-ASSOCIATED PROTEIN-LIKE 2"/>
    <property type="match status" value="1"/>
</dbReference>
<dbReference type="PANTHER" id="PTHR15036">
    <property type="entry name" value="PIKACHURIN-LIKE PROTEIN"/>
    <property type="match status" value="1"/>
</dbReference>
<dbReference type="Pfam" id="PF00754">
    <property type="entry name" value="F5_F8_type_C"/>
    <property type="match status" value="1"/>
</dbReference>
<dbReference type="Pfam" id="PF02210">
    <property type="entry name" value="Laminin_G_2"/>
    <property type="match status" value="4"/>
</dbReference>
<dbReference type="SMART" id="SM00294">
    <property type="entry name" value="4.1m"/>
    <property type="match status" value="1"/>
</dbReference>
<dbReference type="SMART" id="SM00181">
    <property type="entry name" value="EGF"/>
    <property type="match status" value="2"/>
</dbReference>
<dbReference type="SMART" id="SM00231">
    <property type="entry name" value="FA58C"/>
    <property type="match status" value="1"/>
</dbReference>
<dbReference type="SMART" id="SM00282">
    <property type="entry name" value="LamG"/>
    <property type="match status" value="4"/>
</dbReference>
<dbReference type="SUPFAM" id="SSF49899">
    <property type="entry name" value="Concanavalin A-like lectins/glucanases"/>
    <property type="match status" value="4"/>
</dbReference>
<dbReference type="SUPFAM" id="SSF57196">
    <property type="entry name" value="EGF/Laminin"/>
    <property type="match status" value="1"/>
</dbReference>
<dbReference type="SUPFAM" id="SSF56496">
    <property type="entry name" value="Fibrinogen C-terminal domain-like"/>
    <property type="match status" value="1"/>
</dbReference>
<dbReference type="SUPFAM" id="SSF49785">
    <property type="entry name" value="Galactose-binding domain-like"/>
    <property type="match status" value="1"/>
</dbReference>
<dbReference type="PROSITE" id="PS50026">
    <property type="entry name" value="EGF_3"/>
    <property type="match status" value="2"/>
</dbReference>
<dbReference type="PROSITE" id="PS01285">
    <property type="entry name" value="FA58C_1"/>
    <property type="match status" value="1"/>
</dbReference>
<dbReference type="PROSITE" id="PS01286">
    <property type="entry name" value="FA58C_2"/>
    <property type="match status" value="1"/>
</dbReference>
<dbReference type="PROSITE" id="PS50022">
    <property type="entry name" value="FA58C_3"/>
    <property type="match status" value="1"/>
</dbReference>
<dbReference type="PROSITE" id="PS51406">
    <property type="entry name" value="FIBRINOGEN_C_2"/>
    <property type="match status" value="1"/>
</dbReference>
<dbReference type="PROSITE" id="PS50025">
    <property type="entry name" value="LAM_G_DOMAIN"/>
    <property type="match status" value="4"/>
</dbReference>
<comment type="function">
    <text evidence="2 3">Required for gap junction formation (By similarity). Required, with CNTNAP1, for radial and longitudinal organization of myelinated axons. Plays a role in the formation of functional distinct domains critical for saltatory conduction of nerve impulses in myelinated nerve fibers. Demarcates the juxtaparanodal region of the axo-glial junction.</text>
</comment>
<comment type="subunit">
    <text evidence="2">Interacts (via C-terminus) with KCNA2.</text>
</comment>
<comment type="subcellular location">
    <subcellularLocation>
        <location evidence="2">Membrane</location>
        <topology evidence="9">Single-pass type I membrane protein</topology>
    </subcellularLocation>
    <subcellularLocation>
        <location evidence="2">Cell projection</location>
        <location evidence="2">Axon</location>
    </subcellularLocation>
    <subcellularLocation>
        <location evidence="2">Cell junction</location>
        <location evidence="2">Paranodal septate junction</location>
    </subcellularLocation>
    <text evidence="2">Expressed in the juxtaparadonal region.</text>
</comment>
<comment type="similarity">
    <text evidence="9">Belongs to the neurexin family.</text>
</comment>
<evidence type="ECO:0000250" key="1"/>
<evidence type="ECO:0000250" key="2">
    <source>
        <dbReference type="UniProtKB" id="Q9CPW0"/>
    </source>
</evidence>
<evidence type="ECO:0000250" key="3">
    <source>
        <dbReference type="UniProtKB" id="Q9UHC6"/>
    </source>
</evidence>
<evidence type="ECO:0000255" key="4"/>
<evidence type="ECO:0000255" key="5">
    <source>
        <dbReference type="PROSITE-ProRule" id="PRU00076"/>
    </source>
</evidence>
<evidence type="ECO:0000255" key="6">
    <source>
        <dbReference type="PROSITE-ProRule" id="PRU00081"/>
    </source>
</evidence>
<evidence type="ECO:0000255" key="7">
    <source>
        <dbReference type="PROSITE-ProRule" id="PRU00122"/>
    </source>
</evidence>
<evidence type="ECO:0000255" key="8">
    <source>
        <dbReference type="PROSITE-ProRule" id="PRU00739"/>
    </source>
</evidence>
<evidence type="ECO:0000305" key="9"/>
<sequence>MLAAPRAGCGAALLLWIVSSCLCRAWTAPSTSQKCDEPLVSGLPHGAFSSSSSISGSYSPGYAKINKRGGAGGWSPSDSDHYQWLQVDFGNRKQISAIATQGRYSSSDWVTQYRMLYSDTGRNWKPYHQDGNIWAFPGNINSDGVVRHELQHPVIARYVRVVPLDWNGEGRIGLRIEVYGCSYWADVINFDGHVVLPYRFRNKKMKTLKDVIALKFKTSESEGVILHGEGQQGDYITLELKKAKLVLSLNLGSNQLGPIYGHTSVMTGSLLDDHHWHSVIIERQGRSINLTLDRSMQHFRTNGEFDYLDLDYEITFGGIPFSGKPSSSSRKNFKGCMESINYNGINITVLARRKKLEPSNVGNLSFSCVEPYTVPVFFNATSYLEVPGRLNQDLFSVSFQFRTWNPNGLLVFSHFADNLGNVEIDLTESKVGVHINITQTKMSQIDISSGSGLNDGQWHEVRFLAKENFAILTIDGDEASAVRTNSPLQVKTGEKYFFGGFLNQMNNSSHSVLQPSFQGCMQLIQVDDQLVNLYEVAQRKPGSFANVSIDMCAIIDRCVPNHCERGGKCSQTWDSFKCTCDETGYTGATCHNSIYEPSCEAYKHLGQTSNYYWIDPDGSGPLGPLKVYCNMTEDKVWTIVSHDLQMQTTVVSYNPEKHSVIQLVYSASMDQISAITDSAEYCEQYISYFCKMSRLLNTPDGSPYTWWVGKANEKHYYWGGSGPGIQKCACGIERNCTDPKYYCNCDADYKQWRKDAGFLSYKDHLPVSQVVVGDTDRQGSEAKLSVGPLRCQGDRNYWNAASFPNPSSYLHFSTFQGETSADISFYFKTLTPWGVFLENMGKEDFIKLELKSATEVSFSFDVGNGPVEIVVRSPTPLNDDQWHRITAERNVKQASLQVDRLPQQIRKAPTEGHTRLELYSQLFVGGAGGQQGFLGCIRSLRMNGVTLDLEERAKVTSGFISGCSGHCTSYGTNCENGGKCLERYHGYSCDCSNTAYDGTFCNKDVGAFFEEGMWLRYNFQAPATNARDSSSRVENAPDQQNSHPDLAQEEIRFSFSTTKAPCILLYISSFTTDFLAVLVKPTGSLQIRYNLGGTREPYNIDTDHRNMANGQPHSVNNTRHEKTIILKLDHYPSVSYHLPSSSDTLFNSPKSLFLGKVIETGKIDQEIHKYNTPGFTGCLSRVQFNQIAPLKAALRQTNASAHVHIQGELVESNCGASPLTLSPMSSATDPWHLDHLDSASADFPYNPGQGQAIRNGVNRNSAIIGGVIAVVIFTILCTLVFLIRYMFRHKGTYHTNEAKGAESAESADAAIMNNDPNFTETIDESKKEWLI</sequence>
<reference key="1">
    <citation type="submission" date="2004-11" db="EMBL/GenBank/DDBJ databases">
        <authorList>
            <consortium name="The German cDNA consortium"/>
        </authorList>
    </citation>
    <scope>NUCLEOTIDE SEQUENCE [LARGE SCALE MRNA]</scope>
    <source>
        <tissue>Kidney</tissue>
    </source>
</reference>